<dbReference type="EMBL" id="BA000036">
    <property type="protein sequence ID" value="BAB97930.1"/>
    <property type="molecule type" value="Genomic_DNA"/>
</dbReference>
<dbReference type="EMBL" id="BX927149">
    <property type="protein sequence ID" value="CAF19245.1"/>
    <property type="status" value="ALT_INIT"/>
    <property type="molecule type" value="Genomic_DNA"/>
</dbReference>
<dbReference type="RefSeq" id="NP_599776.2">
    <property type="nucleotide sequence ID" value="NC_003450.3"/>
</dbReference>
<dbReference type="RefSeq" id="WP_003854344.1">
    <property type="nucleotide sequence ID" value="NC_006958.1"/>
</dbReference>
<dbReference type="SMR" id="Q8NSX8"/>
<dbReference type="STRING" id="196627.cg0628"/>
<dbReference type="GeneID" id="1021538"/>
<dbReference type="KEGG" id="cgb:cg0628"/>
<dbReference type="KEGG" id="cgl:Cgl0537"/>
<dbReference type="PATRIC" id="fig|196627.13.peg.531"/>
<dbReference type="eggNOG" id="COG0096">
    <property type="taxonomic scope" value="Bacteria"/>
</dbReference>
<dbReference type="HOGENOM" id="CLU_098428_0_1_11"/>
<dbReference type="OrthoDB" id="9802617at2"/>
<dbReference type="BioCyc" id="CORYNE:G18NG-10099-MONOMER"/>
<dbReference type="Proteomes" id="UP000000582">
    <property type="component" value="Chromosome"/>
</dbReference>
<dbReference type="Proteomes" id="UP000001009">
    <property type="component" value="Chromosome"/>
</dbReference>
<dbReference type="GO" id="GO:1990904">
    <property type="term" value="C:ribonucleoprotein complex"/>
    <property type="evidence" value="ECO:0007669"/>
    <property type="project" value="UniProtKB-KW"/>
</dbReference>
<dbReference type="GO" id="GO:0005840">
    <property type="term" value="C:ribosome"/>
    <property type="evidence" value="ECO:0007669"/>
    <property type="project" value="UniProtKB-KW"/>
</dbReference>
<dbReference type="GO" id="GO:0019843">
    <property type="term" value="F:rRNA binding"/>
    <property type="evidence" value="ECO:0007669"/>
    <property type="project" value="UniProtKB-UniRule"/>
</dbReference>
<dbReference type="GO" id="GO:0003735">
    <property type="term" value="F:structural constituent of ribosome"/>
    <property type="evidence" value="ECO:0007669"/>
    <property type="project" value="InterPro"/>
</dbReference>
<dbReference type="GO" id="GO:0006412">
    <property type="term" value="P:translation"/>
    <property type="evidence" value="ECO:0007669"/>
    <property type="project" value="UniProtKB-UniRule"/>
</dbReference>
<dbReference type="FunFam" id="3.30.1370.30:FF:000002">
    <property type="entry name" value="30S ribosomal protein S8"/>
    <property type="match status" value="1"/>
</dbReference>
<dbReference type="FunFam" id="3.30.1490.10:FF:000001">
    <property type="entry name" value="30S ribosomal protein S8"/>
    <property type="match status" value="1"/>
</dbReference>
<dbReference type="Gene3D" id="3.30.1370.30">
    <property type="match status" value="1"/>
</dbReference>
<dbReference type="Gene3D" id="3.30.1490.10">
    <property type="match status" value="1"/>
</dbReference>
<dbReference type="HAMAP" id="MF_01302_B">
    <property type="entry name" value="Ribosomal_uS8_B"/>
    <property type="match status" value="1"/>
</dbReference>
<dbReference type="InterPro" id="IPR000630">
    <property type="entry name" value="Ribosomal_uS8"/>
</dbReference>
<dbReference type="InterPro" id="IPR035987">
    <property type="entry name" value="Ribosomal_uS8_sf"/>
</dbReference>
<dbReference type="NCBIfam" id="NF001109">
    <property type="entry name" value="PRK00136.1"/>
    <property type="match status" value="1"/>
</dbReference>
<dbReference type="PANTHER" id="PTHR11758">
    <property type="entry name" value="40S RIBOSOMAL PROTEIN S15A"/>
    <property type="match status" value="1"/>
</dbReference>
<dbReference type="Pfam" id="PF00410">
    <property type="entry name" value="Ribosomal_S8"/>
    <property type="match status" value="1"/>
</dbReference>
<dbReference type="SUPFAM" id="SSF56047">
    <property type="entry name" value="Ribosomal protein S8"/>
    <property type="match status" value="1"/>
</dbReference>
<sequence length="132" mass="14290">MTMTDPIADMLSRVRNASNAHHDTVSMPSSKIKANIAEILKQEGYIANYTVEDAKVGKTLSLELKYSNTRERSIAGLRRVSKPGLRVYAKSTNLPQVLGGLGVAIISTSQGLLTDRQATEKGVGGEVLAYVW</sequence>
<comment type="function">
    <text evidence="1">One of the primary rRNA binding proteins, it binds directly to 16S rRNA central domain where it helps coordinate assembly of the platform of the 30S subunit.</text>
</comment>
<comment type="subunit">
    <text evidence="1">Part of the 30S ribosomal subunit. Contacts proteins S5 and S12.</text>
</comment>
<comment type="similarity">
    <text evidence="1">Belongs to the universal ribosomal protein uS8 family.</text>
</comment>
<comment type="sequence caution" evidence="2">
    <conflict type="erroneous initiation">
        <sequence resource="EMBL-CDS" id="CAF19245"/>
    </conflict>
</comment>
<organism>
    <name type="scientific">Corynebacterium glutamicum (strain ATCC 13032 / DSM 20300 / JCM 1318 / BCRC 11384 / CCUG 27702 / LMG 3730 / NBRC 12168 / NCIMB 10025 / NRRL B-2784 / 534)</name>
    <dbReference type="NCBI Taxonomy" id="196627"/>
    <lineage>
        <taxon>Bacteria</taxon>
        <taxon>Bacillati</taxon>
        <taxon>Actinomycetota</taxon>
        <taxon>Actinomycetes</taxon>
        <taxon>Mycobacteriales</taxon>
        <taxon>Corynebacteriaceae</taxon>
        <taxon>Corynebacterium</taxon>
    </lineage>
</organism>
<gene>
    <name evidence="1" type="primary">rpsH</name>
    <name type="ordered locus">Cgl0537</name>
    <name type="ordered locus">cg0628</name>
</gene>
<name>RS8_CORGL</name>
<protein>
    <recommendedName>
        <fullName evidence="1">Small ribosomal subunit protein uS8</fullName>
    </recommendedName>
    <alternativeName>
        <fullName evidence="2">30S ribosomal protein S8</fullName>
    </alternativeName>
</protein>
<keyword id="KW-1185">Reference proteome</keyword>
<keyword id="KW-0687">Ribonucleoprotein</keyword>
<keyword id="KW-0689">Ribosomal protein</keyword>
<keyword id="KW-0694">RNA-binding</keyword>
<keyword id="KW-0699">rRNA-binding</keyword>
<evidence type="ECO:0000255" key="1">
    <source>
        <dbReference type="HAMAP-Rule" id="MF_01302"/>
    </source>
</evidence>
<evidence type="ECO:0000305" key="2"/>
<reference key="1">
    <citation type="journal article" date="2003" name="Appl. Microbiol. Biotechnol.">
        <title>The Corynebacterium glutamicum genome: features and impacts on biotechnological processes.</title>
        <authorList>
            <person name="Ikeda M."/>
            <person name="Nakagawa S."/>
        </authorList>
    </citation>
    <scope>NUCLEOTIDE SEQUENCE [LARGE SCALE GENOMIC DNA]</scope>
    <source>
        <strain>ATCC 13032 / DSM 20300 / JCM 1318 / BCRC 11384 / CCUG 27702 / LMG 3730 / NBRC 12168 / NCIMB 10025 / NRRL B-2784 / 534</strain>
    </source>
</reference>
<reference key="2">
    <citation type="journal article" date="2003" name="J. Biotechnol.">
        <title>The complete Corynebacterium glutamicum ATCC 13032 genome sequence and its impact on the production of L-aspartate-derived amino acids and vitamins.</title>
        <authorList>
            <person name="Kalinowski J."/>
            <person name="Bathe B."/>
            <person name="Bartels D."/>
            <person name="Bischoff N."/>
            <person name="Bott M."/>
            <person name="Burkovski A."/>
            <person name="Dusch N."/>
            <person name="Eggeling L."/>
            <person name="Eikmanns B.J."/>
            <person name="Gaigalat L."/>
            <person name="Goesmann A."/>
            <person name="Hartmann M."/>
            <person name="Huthmacher K."/>
            <person name="Kraemer R."/>
            <person name="Linke B."/>
            <person name="McHardy A.C."/>
            <person name="Meyer F."/>
            <person name="Moeckel B."/>
            <person name="Pfefferle W."/>
            <person name="Puehler A."/>
            <person name="Rey D.A."/>
            <person name="Rueckert C."/>
            <person name="Rupp O."/>
            <person name="Sahm H."/>
            <person name="Wendisch V.F."/>
            <person name="Wiegraebe I."/>
            <person name="Tauch A."/>
        </authorList>
    </citation>
    <scope>NUCLEOTIDE SEQUENCE [LARGE SCALE GENOMIC DNA]</scope>
    <source>
        <strain>ATCC 13032 / DSM 20300 / JCM 1318 / BCRC 11384 / CCUG 27702 / LMG 3730 / NBRC 12168 / NCIMB 10025 / NRRL B-2784 / 534</strain>
    </source>
</reference>
<feature type="chain" id="PRO_0000126401" description="Small ribosomal subunit protein uS8">
    <location>
        <begin position="1"/>
        <end position="132"/>
    </location>
</feature>
<proteinExistence type="inferred from homology"/>
<accession>Q8NSX8</accession>